<evidence type="ECO:0000250" key="1"/>
<evidence type="ECO:0000305" key="2"/>
<name>RR8_LIRTU</name>
<dbReference type="EMBL" id="DQ899947">
    <property type="protein sequence ID" value="ABI32545.1"/>
    <property type="molecule type" value="Genomic_DNA"/>
</dbReference>
<dbReference type="RefSeq" id="YP_740238.1">
    <property type="nucleotide sequence ID" value="NC_008326.1"/>
</dbReference>
<dbReference type="SMR" id="Q0G9I3"/>
<dbReference type="GeneID" id="4266662"/>
<dbReference type="GO" id="GO:0009507">
    <property type="term" value="C:chloroplast"/>
    <property type="evidence" value="ECO:0007669"/>
    <property type="project" value="UniProtKB-SubCell"/>
</dbReference>
<dbReference type="GO" id="GO:1990904">
    <property type="term" value="C:ribonucleoprotein complex"/>
    <property type="evidence" value="ECO:0007669"/>
    <property type="project" value="UniProtKB-KW"/>
</dbReference>
<dbReference type="GO" id="GO:0005840">
    <property type="term" value="C:ribosome"/>
    <property type="evidence" value="ECO:0007669"/>
    <property type="project" value="UniProtKB-KW"/>
</dbReference>
<dbReference type="GO" id="GO:0019843">
    <property type="term" value="F:rRNA binding"/>
    <property type="evidence" value="ECO:0007669"/>
    <property type="project" value="UniProtKB-UniRule"/>
</dbReference>
<dbReference type="GO" id="GO:0003735">
    <property type="term" value="F:structural constituent of ribosome"/>
    <property type="evidence" value="ECO:0007669"/>
    <property type="project" value="InterPro"/>
</dbReference>
<dbReference type="GO" id="GO:0006412">
    <property type="term" value="P:translation"/>
    <property type="evidence" value="ECO:0007669"/>
    <property type="project" value="UniProtKB-UniRule"/>
</dbReference>
<dbReference type="FunFam" id="3.30.1490.10:FF:000001">
    <property type="entry name" value="30S ribosomal protein S8"/>
    <property type="match status" value="1"/>
</dbReference>
<dbReference type="FunFam" id="3.30.1370.30:FF:000004">
    <property type="entry name" value="30S ribosomal protein S8, chloroplastic"/>
    <property type="match status" value="1"/>
</dbReference>
<dbReference type="Gene3D" id="3.30.1370.30">
    <property type="match status" value="1"/>
</dbReference>
<dbReference type="Gene3D" id="3.30.1490.10">
    <property type="match status" value="1"/>
</dbReference>
<dbReference type="HAMAP" id="MF_01302_B">
    <property type="entry name" value="Ribosomal_uS8_B"/>
    <property type="match status" value="1"/>
</dbReference>
<dbReference type="InterPro" id="IPR000630">
    <property type="entry name" value="Ribosomal_uS8"/>
</dbReference>
<dbReference type="InterPro" id="IPR047863">
    <property type="entry name" value="Ribosomal_uS8_CS"/>
</dbReference>
<dbReference type="InterPro" id="IPR035987">
    <property type="entry name" value="Ribosomal_uS8_sf"/>
</dbReference>
<dbReference type="NCBIfam" id="NF001109">
    <property type="entry name" value="PRK00136.1"/>
    <property type="match status" value="1"/>
</dbReference>
<dbReference type="PANTHER" id="PTHR11758">
    <property type="entry name" value="40S RIBOSOMAL PROTEIN S15A"/>
    <property type="match status" value="1"/>
</dbReference>
<dbReference type="Pfam" id="PF00410">
    <property type="entry name" value="Ribosomal_S8"/>
    <property type="match status" value="1"/>
</dbReference>
<dbReference type="SUPFAM" id="SSF56047">
    <property type="entry name" value="Ribosomal protein S8"/>
    <property type="match status" value="1"/>
</dbReference>
<dbReference type="PROSITE" id="PS00053">
    <property type="entry name" value="RIBOSOMAL_S8"/>
    <property type="match status" value="1"/>
</dbReference>
<sequence length="132" mass="15222">MGRDTIADILTSIRNADMDKKGTVRIASTNMAESVVKILLREGFIENVRKHRENNKYFLVSTLRHRRNRKGTYRNILKRISRPGLRIYSNYQRIPRILGGMGIVILSTSRGIMTDREARLEGIGGEVLCYIW</sequence>
<feature type="chain" id="PRO_0000276725" description="Small ribosomal subunit protein uS8c">
    <location>
        <begin position="1"/>
        <end position="132"/>
    </location>
</feature>
<accession>Q0G9I3</accession>
<proteinExistence type="inferred from homology"/>
<reference key="1">
    <citation type="journal article" date="2006" name="BMC Evol. Biol.">
        <title>Complete plastid genome sequences of Drimys, Liriodendron, and Piper: implications for the phylogenetic relationships of magnoliids.</title>
        <authorList>
            <person name="Cai Z."/>
            <person name="Penaflor C."/>
            <person name="Kuehl J.V."/>
            <person name="Leebens-Mack J."/>
            <person name="Carlson J.E."/>
            <person name="dePamphilis C.W."/>
            <person name="Boore J.L."/>
            <person name="Jansen R.K."/>
        </authorList>
    </citation>
    <scope>NUCLEOTIDE SEQUENCE [LARGE SCALE GENOMIC DNA]</scope>
</reference>
<gene>
    <name type="primary">rps8</name>
</gene>
<organism>
    <name type="scientific">Liriodendron tulipifera</name>
    <name type="common">Tuliptree</name>
    <name type="synonym">Tulip poplar</name>
    <dbReference type="NCBI Taxonomy" id="3415"/>
    <lineage>
        <taxon>Eukaryota</taxon>
        <taxon>Viridiplantae</taxon>
        <taxon>Streptophyta</taxon>
        <taxon>Embryophyta</taxon>
        <taxon>Tracheophyta</taxon>
        <taxon>Spermatophyta</taxon>
        <taxon>Magnoliopsida</taxon>
        <taxon>Magnoliidae</taxon>
        <taxon>Magnoliales</taxon>
        <taxon>Magnoliaceae</taxon>
        <taxon>Liriodendron</taxon>
    </lineage>
</organism>
<protein>
    <recommendedName>
        <fullName evidence="2">Small ribosomal subunit protein uS8c</fullName>
    </recommendedName>
    <alternativeName>
        <fullName>30S ribosomal protein S8, chloroplastic</fullName>
    </alternativeName>
</protein>
<keyword id="KW-0150">Chloroplast</keyword>
<keyword id="KW-0934">Plastid</keyword>
<keyword id="KW-0687">Ribonucleoprotein</keyword>
<keyword id="KW-0689">Ribosomal protein</keyword>
<keyword id="KW-0694">RNA-binding</keyword>
<keyword id="KW-0699">rRNA-binding</keyword>
<comment type="function">
    <text evidence="1">One of the primary rRNA binding proteins, it binds directly to 16S rRNA central domain where it helps coordinate assembly of the platform of the 30S subunit.</text>
</comment>
<comment type="subunit">
    <text evidence="1">Part of the 30S ribosomal subunit.</text>
</comment>
<comment type="subcellular location">
    <subcellularLocation>
        <location>Plastid</location>
        <location>Chloroplast</location>
    </subcellularLocation>
</comment>
<comment type="similarity">
    <text evidence="2">Belongs to the universal ribosomal protein uS8 family.</text>
</comment>
<geneLocation type="chloroplast"/>